<accession>Q6L3C8</accession>
<proteinExistence type="inferred from homology"/>
<organism>
    <name type="scientific">Saccharum hybrid</name>
    <name type="common">Sugarcane</name>
    <dbReference type="NCBI Taxonomy" id="15819"/>
    <lineage>
        <taxon>Eukaryota</taxon>
        <taxon>Viridiplantae</taxon>
        <taxon>Streptophyta</taxon>
        <taxon>Embryophyta</taxon>
        <taxon>Tracheophyta</taxon>
        <taxon>Spermatophyta</taxon>
        <taxon>Magnoliopsida</taxon>
        <taxon>Liliopsida</taxon>
        <taxon>Poales</taxon>
        <taxon>Poaceae</taxon>
        <taxon>PACMAD clade</taxon>
        <taxon>Panicoideae</taxon>
        <taxon>Andropogonodae</taxon>
        <taxon>Andropogoneae</taxon>
        <taxon>Saccharinae</taxon>
        <taxon>Saccharum</taxon>
    </lineage>
</organism>
<dbReference type="EMBL" id="AE009947">
    <property type="protein sequence ID" value="AAT44644.1"/>
    <property type="molecule type" value="Genomic_DNA"/>
</dbReference>
<dbReference type="EMBL" id="AE009947">
    <property type="protein sequence ID" value="AAT44665.1"/>
    <property type="molecule type" value="Genomic_DNA"/>
</dbReference>
<dbReference type="GO" id="GO:0009507">
    <property type="term" value="C:chloroplast"/>
    <property type="evidence" value="ECO:0007669"/>
    <property type="project" value="UniProtKB-SubCell"/>
</dbReference>
<name>YCF76_SACHY</name>
<feature type="chain" id="PRO_0000277385" description="Uncharacterized protein ycf76">
    <location>
        <begin position="1"/>
        <end position="85"/>
    </location>
</feature>
<gene>
    <name type="primary">ycf76-A</name>
    <name type="ordered locus">PS023</name>
</gene>
<gene>
    <name type="primary">ycf76-B</name>
    <name type="ordered locus">PS063</name>
</gene>
<keyword id="KW-0150">Chloroplast</keyword>
<keyword id="KW-0934">Plastid</keyword>
<reference key="1">
    <citation type="journal article" date="2004" name="Curr. Genet.">
        <title>Structural features and transcript-editing analysis of sugarcane (Saccharum officinarum L.) chloroplast genome.</title>
        <authorList>
            <person name="Calsa T. Jr."/>
            <person name="Carraro D.M."/>
            <person name="Benatti M.R."/>
            <person name="Barbosa A.C."/>
            <person name="Kitajima J.P."/>
            <person name="Carrer H."/>
        </authorList>
    </citation>
    <scope>NUCLEOTIDE SEQUENCE [LARGE SCALE GENOMIC DNA]</scope>
    <source>
        <strain>cv. SP-80-3280</strain>
    </source>
</reference>
<sequence length="85" mass="9783">MKKILFSMFYSILVGEEPDSVFLKKEGKQNQVKMIWIAPSSCAKDLTISEGTGATFLFNFHSRVSICFHALFLRPRNMKWTNSFS</sequence>
<geneLocation type="chloroplast"/>
<comment type="subcellular location">
    <subcellularLocation>
        <location>Plastid</location>
        <location>Chloroplast</location>
    </subcellularLocation>
</comment>
<comment type="similarity">
    <text evidence="1">Belongs to the ycf76 family.</text>
</comment>
<protein>
    <recommendedName>
        <fullName>Uncharacterized protein ycf76</fullName>
    </recommendedName>
</protein>
<evidence type="ECO:0000305" key="1"/>